<protein>
    <recommendedName>
        <fullName evidence="1">ATP-dependent Clp protease proteolytic subunit 2</fullName>
        <ecNumber evidence="1">3.4.21.92</ecNumber>
    </recommendedName>
    <alternativeName>
        <fullName evidence="1">Endopeptidase Clp 2</fullName>
    </alternativeName>
</protein>
<dbReference type="EC" id="3.4.21.92" evidence="1"/>
<dbReference type="EMBL" id="CP000009">
    <property type="protein sequence ID" value="AAW61262.1"/>
    <property type="molecule type" value="Genomic_DNA"/>
</dbReference>
<dbReference type="SMR" id="Q5FQT4"/>
<dbReference type="STRING" id="290633.GOX1520"/>
<dbReference type="MEROPS" id="S14.001"/>
<dbReference type="KEGG" id="gox:GOX1520"/>
<dbReference type="eggNOG" id="COG0740">
    <property type="taxonomic scope" value="Bacteria"/>
</dbReference>
<dbReference type="HOGENOM" id="CLU_058707_4_0_5"/>
<dbReference type="Proteomes" id="UP000006375">
    <property type="component" value="Chromosome"/>
</dbReference>
<dbReference type="GO" id="GO:0005737">
    <property type="term" value="C:cytoplasm"/>
    <property type="evidence" value="ECO:0007669"/>
    <property type="project" value="UniProtKB-SubCell"/>
</dbReference>
<dbReference type="GO" id="GO:0009368">
    <property type="term" value="C:endopeptidase Clp complex"/>
    <property type="evidence" value="ECO:0007669"/>
    <property type="project" value="TreeGrafter"/>
</dbReference>
<dbReference type="GO" id="GO:0004176">
    <property type="term" value="F:ATP-dependent peptidase activity"/>
    <property type="evidence" value="ECO:0007669"/>
    <property type="project" value="InterPro"/>
</dbReference>
<dbReference type="GO" id="GO:0051117">
    <property type="term" value="F:ATPase binding"/>
    <property type="evidence" value="ECO:0007669"/>
    <property type="project" value="TreeGrafter"/>
</dbReference>
<dbReference type="GO" id="GO:0004252">
    <property type="term" value="F:serine-type endopeptidase activity"/>
    <property type="evidence" value="ECO:0007669"/>
    <property type="project" value="UniProtKB-UniRule"/>
</dbReference>
<dbReference type="GO" id="GO:0006515">
    <property type="term" value="P:protein quality control for misfolded or incompletely synthesized proteins"/>
    <property type="evidence" value="ECO:0007669"/>
    <property type="project" value="TreeGrafter"/>
</dbReference>
<dbReference type="CDD" id="cd07017">
    <property type="entry name" value="S14_ClpP_2"/>
    <property type="match status" value="1"/>
</dbReference>
<dbReference type="Gene3D" id="3.90.226.10">
    <property type="entry name" value="2-enoyl-CoA Hydratase, Chain A, domain 1"/>
    <property type="match status" value="1"/>
</dbReference>
<dbReference type="HAMAP" id="MF_00444">
    <property type="entry name" value="ClpP"/>
    <property type="match status" value="1"/>
</dbReference>
<dbReference type="InterPro" id="IPR001907">
    <property type="entry name" value="ClpP"/>
</dbReference>
<dbReference type="InterPro" id="IPR029045">
    <property type="entry name" value="ClpP/crotonase-like_dom_sf"/>
</dbReference>
<dbReference type="InterPro" id="IPR023562">
    <property type="entry name" value="ClpP/TepA"/>
</dbReference>
<dbReference type="InterPro" id="IPR033135">
    <property type="entry name" value="ClpP_His_AS"/>
</dbReference>
<dbReference type="NCBIfam" id="NF009205">
    <property type="entry name" value="PRK12553.1"/>
    <property type="match status" value="1"/>
</dbReference>
<dbReference type="PANTHER" id="PTHR10381">
    <property type="entry name" value="ATP-DEPENDENT CLP PROTEASE PROTEOLYTIC SUBUNIT"/>
    <property type="match status" value="1"/>
</dbReference>
<dbReference type="PANTHER" id="PTHR10381:SF70">
    <property type="entry name" value="ATP-DEPENDENT CLP PROTEASE PROTEOLYTIC SUBUNIT"/>
    <property type="match status" value="1"/>
</dbReference>
<dbReference type="Pfam" id="PF00574">
    <property type="entry name" value="CLP_protease"/>
    <property type="match status" value="1"/>
</dbReference>
<dbReference type="PRINTS" id="PR00127">
    <property type="entry name" value="CLPPROTEASEP"/>
</dbReference>
<dbReference type="SUPFAM" id="SSF52096">
    <property type="entry name" value="ClpP/crotonase"/>
    <property type="match status" value="1"/>
</dbReference>
<dbReference type="PROSITE" id="PS00382">
    <property type="entry name" value="CLP_PROTEASE_HIS"/>
    <property type="match status" value="1"/>
</dbReference>
<comment type="function">
    <text evidence="1">Cleaves peptides in various proteins in a process that requires ATP hydrolysis. Has a chymotrypsin-like activity. Plays a major role in the degradation of misfolded proteins.</text>
</comment>
<comment type="catalytic activity">
    <reaction evidence="1">
        <text>Hydrolysis of proteins to small peptides in the presence of ATP and magnesium. alpha-casein is the usual test substrate. In the absence of ATP, only oligopeptides shorter than five residues are hydrolyzed (such as succinyl-Leu-Tyr-|-NHMec, and Leu-Tyr-Leu-|-Tyr-Trp, in which cleavage of the -Tyr-|-Leu- and -Tyr-|-Trp bonds also occurs).</text>
        <dbReference type="EC" id="3.4.21.92"/>
    </reaction>
</comment>
<comment type="subunit">
    <text evidence="1">Fourteen ClpP subunits assemble into 2 heptameric rings which stack back to back to give a disk-like structure with a central cavity, resembling the structure of eukaryotic proteasomes.</text>
</comment>
<comment type="subcellular location">
    <subcellularLocation>
        <location evidence="1">Cytoplasm</location>
    </subcellularLocation>
</comment>
<comment type="similarity">
    <text evidence="1">Belongs to the peptidase S14 family.</text>
</comment>
<accession>Q5FQT4</accession>
<keyword id="KW-0963">Cytoplasm</keyword>
<keyword id="KW-0378">Hydrolase</keyword>
<keyword id="KW-0645">Protease</keyword>
<keyword id="KW-1185">Reference proteome</keyword>
<keyword id="KW-0720">Serine protease</keyword>
<gene>
    <name evidence="1" type="primary">clpP2</name>
    <name type="ordered locus">GOX1520</name>
</gene>
<evidence type="ECO:0000255" key="1">
    <source>
        <dbReference type="HAMAP-Rule" id="MF_00444"/>
    </source>
</evidence>
<evidence type="ECO:0000256" key="2">
    <source>
        <dbReference type="SAM" id="MobiDB-lite"/>
    </source>
</evidence>
<reference key="1">
    <citation type="journal article" date="2005" name="Nat. Biotechnol.">
        <title>Complete genome sequence of the acetic acid bacterium Gluconobacter oxydans.</title>
        <authorList>
            <person name="Prust C."/>
            <person name="Hoffmeister M."/>
            <person name="Liesegang H."/>
            <person name="Wiezer A."/>
            <person name="Fricke W.F."/>
            <person name="Ehrenreich A."/>
            <person name="Gottschalk G."/>
            <person name="Deppenmeier U."/>
        </authorList>
    </citation>
    <scope>NUCLEOTIDE SEQUENCE [LARGE SCALE GENOMIC DNA]</scope>
    <source>
        <strain>621H</strain>
    </source>
</reference>
<feature type="chain" id="PRO_0000179564" description="ATP-dependent Clp protease proteolytic subunit 2">
    <location>
        <begin position="1"/>
        <end position="223"/>
    </location>
</feature>
<feature type="region of interest" description="Disordered" evidence="2">
    <location>
        <begin position="1"/>
        <end position="40"/>
    </location>
</feature>
<feature type="compositionally biased region" description="Acidic residues" evidence="2">
    <location>
        <begin position="21"/>
        <end position="32"/>
    </location>
</feature>
<feature type="active site" description="Nucleophile" evidence="1">
    <location>
        <position position="124"/>
    </location>
</feature>
<feature type="active site" evidence="1">
    <location>
        <position position="149"/>
    </location>
</feature>
<name>CLPP2_GLUOX</name>
<organism>
    <name type="scientific">Gluconobacter oxydans (strain 621H)</name>
    <name type="common">Gluconobacter suboxydans</name>
    <dbReference type="NCBI Taxonomy" id="290633"/>
    <lineage>
        <taxon>Bacteria</taxon>
        <taxon>Pseudomonadati</taxon>
        <taxon>Pseudomonadota</taxon>
        <taxon>Alphaproteobacteria</taxon>
        <taxon>Acetobacterales</taxon>
        <taxon>Acetobacteraceae</taxon>
        <taxon>Gluconobacter</taxon>
    </lineage>
</organism>
<proteinExistence type="inferred from homology"/>
<sequence length="223" mass="24703">MHAGSGNDMDITRMTPTRLDDEPDAPEPETREDDNKTLNSPISELEGRLFDQRKVLIFGGINDKIARDVTGRLLALAGTSDKPIDVYVNSPGGHVESGDTIHDMIRFVDSIAPINMIGTGWVASAGALIYAAGRPERRVCLPNTRFLLHQPMGGVRGPATDIDIEAREIIKMRERLNRIFAKETGQTYEKVAKDTDRNYWMSANEAIAYGLVNRIIHSATELK</sequence>